<keyword id="KW-1003">Cell membrane</keyword>
<keyword id="KW-0963">Cytoplasm</keyword>
<keyword id="KW-0238">DNA-binding</keyword>
<keyword id="KW-0967">Endosome</keyword>
<keyword id="KW-0333">Golgi apparatus</keyword>
<keyword id="KW-0458">Lysosome</keyword>
<keyword id="KW-0472">Membrane</keyword>
<keyword id="KW-0479">Metal-binding</keyword>
<keyword id="KW-0539">Nucleus</keyword>
<keyword id="KW-1185">Reference proteome</keyword>
<keyword id="KW-0804">Transcription</keyword>
<keyword id="KW-0805">Transcription regulation</keyword>
<keyword id="KW-0862">Zinc</keyword>
<reference key="1">
    <citation type="submission" date="2001-03" db="EMBL/GenBank/DDBJ databases">
        <title>Molecular cloning and functional characterization of chicken SIMPLE, a human SIMPLE ortholog.</title>
        <authorList>
            <person name="Moriwaki Y."/>
            <person name="Begum N.A."/>
            <person name="Kobayashi M."/>
            <person name="Matsumoto M."/>
            <person name="Seya T."/>
        </authorList>
    </citation>
    <scope>NUCLEOTIDE SEQUENCE [GENOMIC DNA / MRNA]</scope>
    <source>
        <tissue>Thymus</tissue>
    </source>
</reference>
<reference key="2">
    <citation type="submission" date="2004-09" db="EMBL/GenBank/DDBJ databases">
        <title>Gallus gallus TNF-alpha factor.</title>
        <authorList>
            <person name="Lillehoj H.S."/>
            <person name="Min W."/>
            <person name="Ashwell C.M."/>
            <person name="Matukumalli L.K."/>
            <person name="van Tassel C."/>
            <person name="Han J.Y."/>
        </authorList>
    </citation>
    <scope>NUCLEOTIDE SEQUENCE [MRNA]</scope>
</reference>
<feature type="chain" id="PRO_0000084443" description="Lipopolysaccharide-induced tumor necrosis factor-alpha factor homolog">
    <location>
        <begin position="1"/>
        <end position="148"/>
    </location>
</feature>
<feature type="domain" description="LITAF" evidence="3">
    <location>
        <begin position="62"/>
        <end position="147"/>
    </location>
</feature>
<feature type="region of interest" description="Disordered" evidence="4">
    <location>
        <begin position="35"/>
        <end position="56"/>
    </location>
</feature>
<feature type="region of interest" description="Membrane-binding amphipathic helix" evidence="5">
    <location>
        <begin position="103"/>
        <end position="123"/>
    </location>
</feature>
<feature type="short sequence motif" description="PPxY motif" evidence="1">
    <location>
        <begin position="13"/>
        <end position="16"/>
    </location>
</feature>
<feature type="binding site" evidence="1">
    <location>
        <position position="83"/>
    </location>
    <ligand>
        <name>Zn(2+)</name>
        <dbReference type="ChEBI" id="CHEBI:29105"/>
    </ligand>
</feature>
<feature type="binding site" evidence="1">
    <location>
        <position position="86"/>
    </location>
    <ligand>
        <name>Zn(2+)</name>
        <dbReference type="ChEBI" id="CHEBI:29105"/>
    </ligand>
</feature>
<feature type="binding site" evidence="1">
    <location>
        <position position="135"/>
    </location>
    <ligand>
        <name>Zn(2+)</name>
        <dbReference type="ChEBI" id="CHEBI:29105"/>
    </ligand>
</feature>
<feature type="binding site" evidence="1">
    <location>
        <position position="138"/>
    </location>
    <ligand>
        <name>Zn(2+)</name>
        <dbReference type="ChEBI" id="CHEBI:29105"/>
    </ligand>
</feature>
<organism>
    <name type="scientific">Gallus gallus</name>
    <name type="common">Chicken</name>
    <dbReference type="NCBI Taxonomy" id="9031"/>
    <lineage>
        <taxon>Eukaryota</taxon>
        <taxon>Metazoa</taxon>
        <taxon>Chordata</taxon>
        <taxon>Craniata</taxon>
        <taxon>Vertebrata</taxon>
        <taxon>Euteleostomi</taxon>
        <taxon>Archelosauria</taxon>
        <taxon>Archosauria</taxon>
        <taxon>Dinosauria</taxon>
        <taxon>Saurischia</taxon>
        <taxon>Theropoda</taxon>
        <taxon>Coelurosauria</taxon>
        <taxon>Aves</taxon>
        <taxon>Neognathae</taxon>
        <taxon>Galloanserae</taxon>
        <taxon>Galliformes</taxon>
        <taxon>Phasianidae</taxon>
        <taxon>Phasianinae</taxon>
        <taxon>Gallus</taxon>
    </lineage>
</organism>
<dbReference type="EMBL" id="AB058634">
    <property type="protein sequence ID" value="BAB85678.1"/>
    <property type="molecule type" value="mRNA"/>
</dbReference>
<dbReference type="EMBL" id="AB061737">
    <property type="protein sequence ID" value="BAC58022.1"/>
    <property type="molecule type" value="Genomic_DNA"/>
</dbReference>
<dbReference type="EMBL" id="AY765397">
    <property type="protein sequence ID" value="AAU95774.1"/>
    <property type="molecule type" value="mRNA"/>
</dbReference>
<dbReference type="RefSeq" id="NP_989598.1">
    <property type="nucleotide sequence ID" value="NM_204267.2"/>
</dbReference>
<dbReference type="RefSeq" id="XP_015149607.2">
    <property type="nucleotide sequence ID" value="XM_015294121.4"/>
</dbReference>
<dbReference type="RefSeq" id="XP_015149610.2">
    <property type="nucleotide sequence ID" value="XM_015294124.4"/>
</dbReference>
<dbReference type="RefSeq" id="XP_040503238.1">
    <property type="nucleotide sequence ID" value="XM_040647304.2"/>
</dbReference>
<dbReference type="RefSeq" id="XP_046756505.1">
    <property type="nucleotide sequence ID" value="XM_046900549.1"/>
</dbReference>
<dbReference type="RefSeq" id="XP_046756506.1">
    <property type="nucleotide sequence ID" value="XM_046900550.1"/>
</dbReference>
<dbReference type="RefSeq" id="XP_046756507.1">
    <property type="nucleotide sequence ID" value="XM_046900551.1"/>
</dbReference>
<dbReference type="RefSeq" id="XP_046783217.1">
    <property type="nucleotide sequence ID" value="XM_046927261.1"/>
</dbReference>
<dbReference type="RefSeq" id="XP_046783218.1">
    <property type="nucleotide sequence ID" value="XM_046927262.1"/>
</dbReference>
<dbReference type="RefSeq" id="XP_046783219.1">
    <property type="nucleotide sequence ID" value="XM_046927263.1"/>
</dbReference>
<dbReference type="RefSeq" id="XP_046783220.1">
    <property type="nucleotide sequence ID" value="XM_046927264.1"/>
</dbReference>
<dbReference type="RefSeq" id="XP_046783221.1">
    <property type="nucleotide sequence ID" value="XM_046927265.1"/>
</dbReference>
<dbReference type="FunCoup" id="Q8QGW7">
    <property type="interactions" value="70"/>
</dbReference>
<dbReference type="STRING" id="9031.ENSGALP00000066763"/>
<dbReference type="PaxDb" id="9031-ENSGALP00000005086"/>
<dbReference type="Ensembl" id="ENSGALT00010052859.1">
    <property type="protein sequence ID" value="ENSGALP00010031765.1"/>
    <property type="gene ID" value="ENSGALG00010021744.1"/>
</dbReference>
<dbReference type="GeneID" id="374125"/>
<dbReference type="KEGG" id="gga:374125"/>
<dbReference type="CTD" id="9516"/>
<dbReference type="VEuPathDB" id="HostDB:geneid_374125"/>
<dbReference type="eggNOG" id="ENOG502S2GM">
    <property type="taxonomic scope" value="Eukaryota"/>
</dbReference>
<dbReference type="GeneTree" id="ENSGT00940000155366"/>
<dbReference type="InParanoid" id="Q8QGW7"/>
<dbReference type="OMA" id="VTFYDRP"/>
<dbReference type="OrthoDB" id="4713066at2759"/>
<dbReference type="PhylomeDB" id="Q8QGW7"/>
<dbReference type="PRO" id="PR:Q8QGW7"/>
<dbReference type="Proteomes" id="UP000000539">
    <property type="component" value="Chromosome 14"/>
</dbReference>
<dbReference type="GO" id="GO:0098559">
    <property type="term" value="C:cytoplasmic side of early endosome membrane"/>
    <property type="evidence" value="ECO:0000250"/>
    <property type="project" value="UniProtKB"/>
</dbReference>
<dbReference type="GO" id="GO:0098560">
    <property type="term" value="C:cytoplasmic side of late endosome membrane"/>
    <property type="evidence" value="ECO:0000250"/>
    <property type="project" value="UniProtKB"/>
</dbReference>
<dbReference type="GO" id="GO:0098574">
    <property type="term" value="C:cytoplasmic side of lysosomal membrane"/>
    <property type="evidence" value="ECO:0000250"/>
    <property type="project" value="UniProtKB"/>
</dbReference>
<dbReference type="GO" id="GO:0009898">
    <property type="term" value="C:cytoplasmic side of plasma membrane"/>
    <property type="evidence" value="ECO:0000250"/>
    <property type="project" value="UniProtKB"/>
</dbReference>
<dbReference type="GO" id="GO:0000139">
    <property type="term" value="C:Golgi membrane"/>
    <property type="evidence" value="ECO:0007669"/>
    <property type="project" value="UniProtKB-SubCell"/>
</dbReference>
<dbReference type="GO" id="GO:0005765">
    <property type="term" value="C:lysosomal membrane"/>
    <property type="evidence" value="ECO:0000304"/>
    <property type="project" value="AgBase"/>
</dbReference>
<dbReference type="GO" id="GO:0005634">
    <property type="term" value="C:nucleus"/>
    <property type="evidence" value="ECO:0000318"/>
    <property type="project" value="GO_Central"/>
</dbReference>
<dbReference type="GO" id="GO:0005125">
    <property type="term" value="F:cytokine activity"/>
    <property type="evidence" value="ECO:0000303"/>
    <property type="project" value="AgBase"/>
</dbReference>
<dbReference type="GO" id="GO:0003677">
    <property type="term" value="F:DNA binding"/>
    <property type="evidence" value="ECO:0007669"/>
    <property type="project" value="UniProtKB-KW"/>
</dbReference>
<dbReference type="GO" id="GO:0008270">
    <property type="term" value="F:zinc ion binding"/>
    <property type="evidence" value="ECO:0000250"/>
    <property type="project" value="UniProtKB"/>
</dbReference>
<dbReference type="GO" id="GO:0001816">
    <property type="term" value="P:cytokine production"/>
    <property type="evidence" value="ECO:0000304"/>
    <property type="project" value="AgBase"/>
</dbReference>
<dbReference type="GO" id="GO:0001817">
    <property type="term" value="P:regulation of cytokine production"/>
    <property type="evidence" value="ECO:0000318"/>
    <property type="project" value="GO_Central"/>
</dbReference>
<dbReference type="GO" id="GO:0019953">
    <property type="term" value="P:sexual reproduction"/>
    <property type="evidence" value="ECO:0000304"/>
    <property type="project" value="AgBase"/>
</dbReference>
<dbReference type="InterPro" id="IPR006629">
    <property type="entry name" value="LITAF"/>
</dbReference>
<dbReference type="InterPro" id="IPR037519">
    <property type="entry name" value="LITAF_fam"/>
</dbReference>
<dbReference type="PANTHER" id="PTHR23292">
    <property type="entry name" value="LIPOPOLYSACCHARIDE-INDUCED TUMOR NECROSIS FACTOR-ALPHA FACTOR"/>
    <property type="match status" value="1"/>
</dbReference>
<dbReference type="PANTHER" id="PTHR23292:SF46">
    <property type="entry name" value="LIPOPOLYSACCHARIDE-INDUCED TUMOR NECROSIS FACTOR-ALPHA FACTOR HOMOLOG"/>
    <property type="match status" value="1"/>
</dbReference>
<dbReference type="Pfam" id="PF10601">
    <property type="entry name" value="zf-LITAF-like"/>
    <property type="match status" value="1"/>
</dbReference>
<dbReference type="SMART" id="SM00714">
    <property type="entry name" value="LITAF"/>
    <property type="match status" value="1"/>
</dbReference>
<dbReference type="PROSITE" id="PS51837">
    <property type="entry name" value="LITAF"/>
    <property type="match status" value="1"/>
</dbReference>
<accession>Q8QGW7</accession>
<proteinExistence type="evidence at transcript level"/>
<name>LITAF_CHICK</name>
<sequence length="148" mass="16013">MSAPSGFPAPSAPPSYEETVGINVNYPHPYPVPQPGLRPDGKGMNPPQYSGQPMPTSTPVTVQTVYVQQPVVLFYDRPVQMSCPSCNQMIVTRLCYESGALTWLSCGGLFLLGCIAGCCLIPFCVDALKDVEHFCPNCNAHVGSYKRL</sequence>
<comment type="function">
    <text evidence="1">Plays a role in endosomal protein trafficking and in targeting proteins for lysosomal degradation. May also contribute to the regulation of gene expression in the nucleus. Binds DNA (in vitro) and may play a synergistic role in the nucleus in regulating the expression of numerous cytokines.</text>
</comment>
<comment type="subcellular location">
    <subcellularLocation>
        <location evidence="1">Cytoplasm</location>
    </subcellularLocation>
    <subcellularLocation>
        <location evidence="1">Nucleus</location>
    </subcellularLocation>
    <subcellularLocation>
        <location evidence="1">Lysosome membrane</location>
        <topology evidence="1">Peripheral membrane protein</topology>
        <orientation evidence="1">Cytoplasmic side</orientation>
    </subcellularLocation>
    <subcellularLocation>
        <location evidence="1">Early endosome membrane</location>
    </subcellularLocation>
    <subcellularLocation>
        <location evidence="1">Late endosome membrane</location>
    </subcellularLocation>
    <subcellularLocation>
        <location evidence="1">Endosome membrane</location>
        <topology evidence="1">Peripheral membrane protein</topology>
        <orientation evidence="1">Cytoplasmic side</orientation>
    </subcellularLocation>
    <subcellularLocation>
        <location evidence="1">Cell membrane</location>
        <topology evidence="1">Peripheral membrane protein</topology>
        <orientation evidence="1">Cytoplasmic side</orientation>
    </subcellularLocation>
    <subcellularLocation>
        <location evidence="1">Golgi apparatus membrane</location>
    </subcellularLocation>
    <text evidence="1 2">Associated with membranes of lysosomes, early and late endosomes. Can translocate from the cytoplasm into the nucleus (By similarity). Detected at Schmidt-Lanterman incisures and in nodal regions of myelinating Schwann cells (By similarity).</text>
</comment>
<comment type="domain">
    <text evidence="1">The LITAF domain is stabilized by a bound zinc ion. The LITAF domain contains an amphipathic helix that mediates interaction with lipid membranes.</text>
</comment>
<comment type="similarity">
    <text evidence="5">Belongs to the CDIP1/LITAF family.</text>
</comment>
<evidence type="ECO:0000250" key="1">
    <source>
        <dbReference type="UniProtKB" id="Q99732"/>
    </source>
</evidence>
<evidence type="ECO:0000250" key="2">
    <source>
        <dbReference type="UniProtKB" id="Q9JLJ0"/>
    </source>
</evidence>
<evidence type="ECO:0000255" key="3">
    <source>
        <dbReference type="PROSITE-ProRule" id="PRU01181"/>
    </source>
</evidence>
<evidence type="ECO:0000256" key="4">
    <source>
        <dbReference type="SAM" id="MobiDB-lite"/>
    </source>
</evidence>
<evidence type="ECO:0000305" key="5"/>
<protein>
    <recommendedName>
        <fullName>Lipopolysaccharide-induced tumor necrosis factor-alpha factor homolog</fullName>
        <shortName>LPS-induced TNF-alpha factor homolog</shortName>
    </recommendedName>
    <alternativeName>
        <fullName>Small integral membrane protein of lysosome/late endosome</fullName>
    </alternativeName>
</protein>
<gene>
    <name type="primary">LITAF</name>
    <name type="synonym">SIMPLE</name>
</gene>